<dbReference type="EC" id="3.5.99.7"/>
<dbReference type="EMBL" id="BA000001">
    <property type="protein sequence ID" value="BAA29122.1"/>
    <property type="status" value="ALT_INIT"/>
    <property type="molecule type" value="Genomic_DNA"/>
</dbReference>
<dbReference type="PIR" id="C71224">
    <property type="entry name" value="C71224"/>
</dbReference>
<dbReference type="RefSeq" id="WP_010884169.1">
    <property type="nucleotide sequence ID" value="NC_000961.1"/>
</dbReference>
<dbReference type="PDB" id="1J0A">
    <property type="method" value="X-ray"/>
    <property type="resolution" value="2.50 A"/>
    <property type="chains" value="A/B/C=1-325"/>
</dbReference>
<dbReference type="PDB" id="1J0B">
    <property type="method" value="X-ray"/>
    <property type="resolution" value="2.70 A"/>
    <property type="chains" value="A/B/C/D/E/F/G/H/I/J/K/L/M/N/O/P/Q/R/S/T/U/V/W/X=1-325"/>
</dbReference>
<dbReference type="PDBsum" id="1J0A"/>
<dbReference type="PDBsum" id="1J0B"/>
<dbReference type="SMR" id="O57809"/>
<dbReference type="STRING" id="70601.gene:9376961"/>
<dbReference type="EnsemblBacteria" id="BAA29122">
    <property type="protein sequence ID" value="BAA29122"/>
    <property type="gene ID" value="BAA29122"/>
</dbReference>
<dbReference type="GeneID" id="1443951"/>
<dbReference type="KEGG" id="pho:PH0054"/>
<dbReference type="eggNOG" id="arCOG01435">
    <property type="taxonomic scope" value="Archaea"/>
</dbReference>
<dbReference type="OrthoDB" id="371827at2157"/>
<dbReference type="BRENDA" id="4.3.1.17">
    <property type="organism ID" value="5244"/>
</dbReference>
<dbReference type="BRENDA" id="4.3.1.18">
    <property type="organism ID" value="5244"/>
</dbReference>
<dbReference type="EvolutionaryTrace" id="O57809"/>
<dbReference type="Proteomes" id="UP000000752">
    <property type="component" value="Chromosome"/>
</dbReference>
<dbReference type="GO" id="GO:0008660">
    <property type="term" value="F:1-aminocyclopropane-1-carboxylate deaminase activity"/>
    <property type="evidence" value="ECO:0007669"/>
    <property type="project" value="UniProtKB-EC"/>
</dbReference>
<dbReference type="GO" id="GO:0019148">
    <property type="term" value="F:D-cysteine desulfhydrase activity"/>
    <property type="evidence" value="ECO:0007669"/>
    <property type="project" value="TreeGrafter"/>
</dbReference>
<dbReference type="Gene3D" id="3.40.50.1100">
    <property type="match status" value="2"/>
</dbReference>
<dbReference type="InterPro" id="IPR027278">
    <property type="entry name" value="ACCD_DCysDesulf"/>
</dbReference>
<dbReference type="InterPro" id="IPR005966">
    <property type="entry name" value="D-Cys_desShydrase"/>
</dbReference>
<dbReference type="InterPro" id="IPR001926">
    <property type="entry name" value="TrpB-like_PALP"/>
</dbReference>
<dbReference type="InterPro" id="IPR036052">
    <property type="entry name" value="TrpB-like_PALP_sf"/>
</dbReference>
<dbReference type="NCBIfam" id="TIGR01275">
    <property type="entry name" value="ACC_deam_rel"/>
    <property type="match status" value="1"/>
</dbReference>
<dbReference type="NCBIfam" id="NF010646">
    <property type="entry name" value="PRK14045.1"/>
    <property type="match status" value="1"/>
</dbReference>
<dbReference type="PANTHER" id="PTHR43780">
    <property type="entry name" value="1-AMINOCYCLOPROPANE-1-CARBOXYLATE DEAMINASE-RELATED"/>
    <property type="match status" value="1"/>
</dbReference>
<dbReference type="PANTHER" id="PTHR43780:SF2">
    <property type="entry name" value="1-AMINOCYCLOPROPANE-1-CARBOXYLATE DEAMINASE-RELATED"/>
    <property type="match status" value="1"/>
</dbReference>
<dbReference type="Pfam" id="PF00291">
    <property type="entry name" value="PALP"/>
    <property type="match status" value="1"/>
</dbReference>
<dbReference type="PIRSF" id="PIRSF006278">
    <property type="entry name" value="ACCD_DCysDesulf"/>
    <property type="match status" value="1"/>
</dbReference>
<dbReference type="SUPFAM" id="SSF53686">
    <property type="entry name" value="Tryptophan synthase beta subunit-like PLP-dependent enzymes"/>
    <property type="match status" value="1"/>
</dbReference>
<organism>
    <name type="scientific">Pyrococcus horikoshii (strain ATCC 700860 / DSM 12428 / JCM 9974 / NBRC 100139 / OT-3)</name>
    <dbReference type="NCBI Taxonomy" id="70601"/>
    <lineage>
        <taxon>Archaea</taxon>
        <taxon>Methanobacteriati</taxon>
        <taxon>Methanobacteriota</taxon>
        <taxon>Thermococci</taxon>
        <taxon>Thermococcales</taxon>
        <taxon>Thermococcaceae</taxon>
        <taxon>Pyrococcus</taxon>
    </lineage>
</organism>
<keyword id="KW-0002">3D-structure</keyword>
<keyword id="KW-0378">Hydrolase</keyword>
<keyword id="KW-0663">Pyridoxal phosphate</keyword>
<accession>O57809</accession>
<comment type="catalytic activity">
    <reaction>
        <text>1-aminocyclopropane-1-carboxylate + H2O = 2-oxobutanoate + NH4(+)</text>
        <dbReference type="Rhea" id="RHEA:16933"/>
        <dbReference type="ChEBI" id="CHEBI:15377"/>
        <dbReference type="ChEBI" id="CHEBI:16763"/>
        <dbReference type="ChEBI" id="CHEBI:28938"/>
        <dbReference type="ChEBI" id="CHEBI:58360"/>
        <dbReference type="EC" id="3.5.99.7"/>
    </reaction>
</comment>
<comment type="cofactor">
    <cofactor evidence="1">
        <name>pyridoxal 5'-phosphate</name>
        <dbReference type="ChEBI" id="CHEBI:597326"/>
    </cofactor>
</comment>
<comment type="similarity">
    <text evidence="2">Belongs to the ACC deaminase/D-cysteine desulfhydrase family.</text>
</comment>
<comment type="sequence caution" evidence="2">
    <conflict type="erroneous initiation">
        <sequence resource="EMBL-CDS" id="BAA29122"/>
    </conflict>
</comment>
<reference key="1">
    <citation type="journal article" date="1998" name="DNA Res.">
        <title>Complete sequence and gene organization of the genome of a hyper-thermophilic archaebacterium, Pyrococcus horikoshii OT3.</title>
        <authorList>
            <person name="Kawarabayasi Y."/>
            <person name="Sawada M."/>
            <person name="Horikawa H."/>
            <person name="Haikawa Y."/>
            <person name="Hino Y."/>
            <person name="Yamamoto S."/>
            <person name="Sekine M."/>
            <person name="Baba S."/>
            <person name="Kosugi H."/>
            <person name="Hosoyama A."/>
            <person name="Nagai Y."/>
            <person name="Sakai M."/>
            <person name="Ogura K."/>
            <person name="Otsuka R."/>
            <person name="Nakazawa H."/>
            <person name="Takamiya M."/>
            <person name="Ohfuku Y."/>
            <person name="Funahashi T."/>
            <person name="Tanaka T."/>
            <person name="Kudoh Y."/>
            <person name="Yamazaki J."/>
            <person name="Kushida N."/>
            <person name="Oguchi A."/>
            <person name="Aoki K."/>
            <person name="Yoshizawa T."/>
            <person name="Nakamura Y."/>
            <person name="Robb F.T."/>
            <person name="Horikoshi K."/>
            <person name="Masuchi Y."/>
            <person name="Shizuya H."/>
            <person name="Kikuchi H."/>
        </authorList>
    </citation>
    <scope>NUCLEOTIDE SEQUENCE [LARGE SCALE GENOMIC DNA]</scope>
    <source>
        <strain>ATCC 700860 / DSM 12428 / JCM 9974 / NBRC 100139 / OT-3</strain>
    </source>
</reference>
<gene>
    <name type="ordered locus">PH0054</name>
    <name type="ORF">PHBE027</name>
</gene>
<sequence>MHPKIFALLAKFPRVELIPWETPIQYLPNISREIGADVYIKRDDLTGLGIGGNKIRKLEYLLGDALSKGADVVITVGAVHSNHAFVTGLAAKKLGLDAILVLRGKEELKGNYLLDKIMGIETRVYDAKDSFELMKYAEEIAEELKREGRKPYVIPPGGASPIGTLGYVRAVGEIATQSEVKFDSIVVAAGSGGTLAGLSLGLSILNEDIRPVGIAVGRFGEVMTSKLDNLIKEAAELLGVKVEVRPELYDYSFGEYGKITGEVAQIIRKVGTREGIILDPVYTGKAFYGLVDLARKGELGEKILFIHTGGISGTFHYGDKLLSLL</sequence>
<evidence type="ECO:0000250" key="1"/>
<evidence type="ECO:0000305" key="2"/>
<evidence type="ECO:0007829" key="3">
    <source>
        <dbReference type="PDB" id="1J0A"/>
    </source>
</evidence>
<evidence type="ECO:0007829" key="4">
    <source>
        <dbReference type="PDB" id="1J0B"/>
    </source>
</evidence>
<proteinExistence type="evidence at protein level"/>
<protein>
    <recommendedName>
        <fullName>Putative 1-aminocyclopropane-1-carboxylate deaminase</fullName>
        <shortName>ACC deaminase</shortName>
        <ecNumber>3.5.99.7</ecNumber>
    </recommendedName>
</protein>
<name>1A1D_PYRHO</name>
<feature type="chain" id="PRO_0000184523" description="Putative 1-aminocyclopropane-1-carboxylate deaminase">
    <location>
        <begin position="1"/>
        <end position="325"/>
    </location>
</feature>
<feature type="modified residue" description="N6-(pyridoxal phosphate)lysine" evidence="1">
    <location>
        <position position="54"/>
    </location>
</feature>
<feature type="helix" evidence="3">
    <location>
        <begin position="3"/>
        <end position="9"/>
    </location>
</feature>
<feature type="strand" evidence="3">
    <location>
        <begin position="24"/>
        <end position="26"/>
    </location>
</feature>
<feature type="helix" evidence="3">
    <location>
        <begin position="28"/>
        <end position="34"/>
    </location>
</feature>
<feature type="strand" evidence="3">
    <location>
        <begin position="36"/>
        <end position="42"/>
    </location>
</feature>
<feature type="helix" evidence="3">
    <location>
        <begin position="43"/>
        <end position="45"/>
    </location>
</feature>
<feature type="strand" evidence="4">
    <location>
        <begin position="46"/>
        <end position="48"/>
    </location>
</feature>
<feature type="helix" evidence="3">
    <location>
        <begin position="54"/>
        <end position="67"/>
    </location>
</feature>
<feature type="strand" evidence="3">
    <location>
        <begin position="71"/>
        <end position="76"/>
    </location>
</feature>
<feature type="helix" evidence="3">
    <location>
        <begin position="82"/>
        <end position="93"/>
    </location>
</feature>
<feature type="strand" evidence="3">
    <location>
        <begin position="97"/>
        <end position="104"/>
    </location>
</feature>
<feature type="helix" evidence="3">
    <location>
        <begin position="110"/>
        <end position="117"/>
    </location>
</feature>
<feature type="strand" evidence="3">
    <location>
        <begin position="121"/>
        <end position="126"/>
    </location>
</feature>
<feature type="turn" evidence="3">
    <location>
        <begin position="130"/>
        <end position="132"/>
    </location>
</feature>
<feature type="helix" evidence="3">
    <location>
        <begin position="133"/>
        <end position="144"/>
    </location>
</feature>
<feature type="strand" evidence="3">
    <location>
        <begin position="151"/>
        <end position="154"/>
    </location>
</feature>
<feature type="helix" evidence="3">
    <location>
        <begin position="156"/>
        <end position="158"/>
    </location>
</feature>
<feature type="helix" evidence="3">
    <location>
        <begin position="161"/>
        <end position="164"/>
    </location>
</feature>
<feature type="helix" evidence="3">
    <location>
        <begin position="166"/>
        <end position="177"/>
    </location>
</feature>
<feature type="strand" evidence="3">
    <location>
        <begin position="183"/>
        <end position="192"/>
    </location>
</feature>
<feature type="helix" evidence="3">
    <location>
        <begin position="193"/>
        <end position="204"/>
    </location>
</feature>
<feature type="strand" evidence="3">
    <location>
        <begin position="210"/>
        <end position="215"/>
    </location>
</feature>
<feature type="strand" evidence="3">
    <location>
        <begin position="220"/>
        <end position="222"/>
    </location>
</feature>
<feature type="helix" evidence="3">
    <location>
        <begin position="223"/>
        <end position="237"/>
    </location>
</feature>
<feature type="strand" evidence="3">
    <location>
        <begin position="247"/>
        <end position="250"/>
    </location>
</feature>
<feature type="helix" evidence="3">
    <location>
        <begin position="261"/>
        <end position="274"/>
    </location>
</feature>
<feature type="turn" evidence="3">
    <location>
        <begin position="280"/>
        <end position="282"/>
    </location>
</feature>
<feature type="helix" evidence="3">
    <location>
        <begin position="283"/>
        <end position="295"/>
    </location>
</feature>
<feature type="turn" evidence="4">
    <location>
        <begin position="296"/>
        <end position="299"/>
    </location>
</feature>
<feature type="strand" evidence="3">
    <location>
        <begin position="301"/>
        <end position="307"/>
    </location>
</feature>
<feature type="helix" evidence="3">
    <location>
        <begin position="311"/>
        <end position="316"/>
    </location>
</feature>
<feature type="helix" evidence="3">
    <location>
        <begin position="318"/>
        <end position="322"/>
    </location>
</feature>